<name>CIA2B_DICDI</name>
<accession>Q54QK1</accession>
<evidence type="ECO:0000250" key="1">
    <source>
        <dbReference type="UniProtKB" id="Q9Y3D0"/>
    </source>
</evidence>
<evidence type="ECO:0000305" key="2"/>
<organism>
    <name type="scientific">Dictyostelium discoideum</name>
    <name type="common">Social amoeba</name>
    <dbReference type="NCBI Taxonomy" id="44689"/>
    <lineage>
        <taxon>Eukaryota</taxon>
        <taxon>Amoebozoa</taxon>
        <taxon>Evosea</taxon>
        <taxon>Eumycetozoa</taxon>
        <taxon>Dictyostelia</taxon>
        <taxon>Dictyosteliales</taxon>
        <taxon>Dictyosteliaceae</taxon>
        <taxon>Dictyostelium</taxon>
    </lineage>
</organism>
<gene>
    <name evidence="1" type="primary">ciao2B</name>
    <name type="synonym">fam96B</name>
    <name type="ORF">DDB_G0283801</name>
</gene>
<comment type="function">
    <text evidence="1">Component of the cytosolic iron-sulfur (Fe/S) protein assembly machinery. Required for the maturation of extramitochondrial Fe/S proteins. May play a role in chromosome segregation through establishment of sister chromatid cohesion.</text>
</comment>
<comment type="subcellular location">
    <subcellularLocation>
        <location evidence="1">Nucleus</location>
    </subcellularLocation>
    <subcellularLocation>
        <location evidence="1">Cytoplasm</location>
        <location evidence="1">Cytoskeleton</location>
        <location evidence="1">Spindle</location>
    </subcellularLocation>
</comment>
<comment type="similarity">
    <text evidence="2">Belongs to the MIP18 family.</text>
</comment>
<sequence length="163" mass="18494">MSDNPNPVIYVDNENCKSFEDNENSFNSSRYSIEEDQIDEFDEQEIFDLVRSITDPEHPLTLEQLNVVRIENVNINLENSYILLYFTPTVPHCSMANLIGLSIKEKLARSLPKRFKVDVIVTPGSHSSESSVNKQLNDKERVSAALDTSSSILTIVNECIKQN</sequence>
<feature type="chain" id="PRO_0000371407" description="Cytosolic iron-sulfur assembly component 2B">
    <location>
        <begin position="1"/>
        <end position="163"/>
    </location>
</feature>
<keyword id="KW-0159">Chromosome partition</keyword>
<keyword id="KW-0963">Cytoplasm</keyword>
<keyword id="KW-0206">Cytoskeleton</keyword>
<keyword id="KW-0539">Nucleus</keyword>
<keyword id="KW-1185">Reference proteome</keyword>
<reference key="1">
    <citation type="journal article" date="2005" name="Nature">
        <title>The genome of the social amoeba Dictyostelium discoideum.</title>
        <authorList>
            <person name="Eichinger L."/>
            <person name="Pachebat J.A."/>
            <person name="Gloeckner G."/>
            <person name="Rajandream M.A."/>
            <person name="Sucgang R."/>
            <person name="Berriman M."/>
            <person name="Song J."/>
            <person name="Olsen R."/>
            <person name="Szafranski K."/>
            <person name="Xu Q."/>
            <person name="Tunggal B."/>
            <person name="Kummerfeld S."/>
            <person name="Madera M."/>
            <person name="Konfortov B.A."/>
            <person name="Rivero F."/>
            <person name="Bankier A.T."/>
            <person name="Lehmann R."/>
            <person name="Hamlin N."/>
            <person name="Davies R."/>
            <person name="Gaudet P."/>
            <person name="Fey P."/>
            <person name="Pilcher K."/>
            <person name="Chen G."/>
            <person name="Saunders D."/>
            <person name="Sodergren E.J."/>
            <person name="Davis P."/>
            <person name="Kerhornou A."/>
            <person name="Nie X."/>
            <person name="Hall N."/>
            <person name="Anjard C."/>
            <person name="Hemphill L."/>
            <person name="Bason N."/>
            <person name="Farbrother P."/>
            <person name="Desany B."/>
            <person name="Just E."/>
            <person name="Morio T."/>
            <person name="Rost R."/>
            <person name="Churcher C.M."/>
            <person name="Cooper J."/>
            <person name="Haydock S."/>
            <person name="van Driessche N."/>
            <person name="Cronin A."/>
            <person name="Goodhead I."/>
            <person name="Muzny D.M."/>
            <person name="Mourier T."/>
            <person name="Pain A."/>
            <person name="Lu M."/>
            <person name="Harper D."/>
            <person name="Lindsay R."/>
            <person name="Hauser H."/>
            <person name="James K.D."/>
            <person name="Quiles M."/>
            <person name="Madan Babu M."/>
            <person name="Saito T."/>
            <person name="Buchrieser C."/>
            <person name="Wardroper A."/>
            <person name="Felder M."/>
            <person name="Thangavelu M."/>
            <person name="Johnson D."/>
            <person name="Knights A."/>
            <person name="Loulseged H."/>
            <person name="Mungall K.L."/>
            <person name="Oliver K."/>
            <person name="Price C."/>
            <person name="Quail M.A."/>
            <person name="Urushihara H."/>
            <person name="Hernandez J."/>
            <person name="Rabbinowitsch E."/>
            <person name="Steffen D."/>
            <person name="Sanders M."/>
            <person name="Ma J."/>
            <person name="Kohara Y."/>
            <person name="Sharp S."/>
            <person name="Simmonds M.N."/>
            <person name="Spiegler S."/>
            <person name="Tivey A."/>
            <person name="Sugano S."/>
            <person name="White B."/>
            <person name="Walker D."/>
            <person name="Woodward J.R."/>
            <person name="Winckler T."/>
            <person name="Tanaka Y."/>
            <person name="Shaulsky G."/>
            <person name="Schleicher M."/>
            <person name="Weinstock G.M."/>
            <person name="Rosenthal A."/>
            <person name="Cox E.C."/>
            <person name="Chisholm R.L."/>
            <person name="Gibbs R.A."/>
            <person name="Loomis W.F."/>
            <person name="Platzer M."/>
            <person name="Kay R.R."/>
            <person name="Williams J.G."/>
            <person name="Dear P.H."/>
            <person name="Noegel A.A."/>
            <person name="Barrell B.G."/>
            <person name="Kuspa A."/>
        </authorList>
    </citation>
    <scope>NUCLEOTIDE SEQUENCE [LARGE SCALE GENOMIC DNA]</scope>
    <source>
        <strain>AX4</strain>
    </source>
</reference>
<dbReference type="EMBL" id="AAFI02000057">
    <property type="protein sequence ID" value="EAL65515.2"/>
    <property type="molecule type" value="Genomic_DNA"/>
</dbReference>
<dbReference type="RefSeq" id="XP_638870.2">
    <property type="nucleotide sequence ID" value="XM_633778.2"/>
</dbReference>
<dbReference type="SMR" id="Q54QK1"/>
<dbReference type="FunCoup" id="Q54QK1">
    <property type="interactions" value="147"/>
</dbReference>
<dbReference type="STRING" id="44689.Q54QK1"/>
<dbReference type="PaxDb" id="44689-DDB0267133"/>
<dbReference type="EnsemblProtists" id="EAL65515">
    <property type="protein sequence ID" value="EAL65515"/>
    <property type="gene ID" value="DDB_G0283801"/>
</dbReference>
<dbReference type="GeneID" id="8624268"/>
<dbReference type="KEGG" id="ddi:DDB_G0283801"/>
<dbReference type="dictyBase" id="DDB_G0283801">
    <property type="gene designation" value="fam96B"/>
</dbReference>
<dbReference type="VEuPathDB" id="AmoebaDB:DDB_G0283801"/>
<dbReference type="eggNOG" id="KOG3381">
    <property type="taxonomic scope" value="Eukaryota"/>
</dbReference>
<dbReference type="HOGENOM" id="CLU_075876_3_1_1"/>
<dbReference type="InParanoid" id="Q54QK1"/>
<dbReference type="OMA" id="IRCCWAR"/>
<dbReference type="PhylomeDB" id="Q54QK1"/>
<dbReference type="PRO" id="PR:Q54QK1"/>
<dbReference type="Proteomes" id="UP000002195">
    <property type="component" value="Chromosome 4"/>
</dbReference>
<dbReference type="GO" id="GO:0097361">
    <property type="term" value="C:cytosolic [4Fe-4S] assembly targeting complex"/>
    <property type="evidence" value="ECO:0000250"/>
    <property type="project" value="UniProtKB"/>
</dbReference>
<dbReference type="GO" id="GO:0005634">
    <property type="term" value="C:nucleus"/>
    <property type="evidence" value="ECO:0007669"/>
    <property type="project" value="UniProtKB-SubCell"/>
</dbReference>
<dbReference type="GO" id="GO:0005819">
    <property type="term" value="C:spindle"/>
    <property type="evidence" value="ECO:0007669"/>
    <property type="project" value="UniProtKB-SubCell"/>
</dbReference>
<dbReference type="GO" id="GO:0007059">
    <property type="term" value="P:chromosome segregation"/>
    <property type="evidence" value="ECO:0007669"/>
    <property type="project" value="UniProtKB-KW"/>
</dbReference>
<dbReference type="GO" id="GO:0051604">
    <property type="term" value="P:protein maturation"/>
    <property type="evidence" value="ECO:0000250"/>
    <property type="project" value="UniProtKB"/>
</dbReference>
<dbReference type="FunFam" id="3.30.300.130:FF:000005">
    <property type="entry name" value="Mitotic spindle-associated mmxd complex subunit"/>
    <property type="match status" value="1"/>
</dbReference>
<dbReference type="Gene3D" id="6.10.250.1280">
    <property type="match status" value="1"/>
</dbReference>
<dbReference type="Gene3D" id="3.30.300.130">
    <property type="entry name" value="Fe-S cluster assembly (FSCA)"/>
    <property type="match status" value="1"/>
</dbReference>
<dbReference type="InterPro" id="IPR034904">
    <property type="entry name" value="FSCA_dom_sf"/>
</dbReference>
<dbReference type="InterPro" id="IPR039796">
    <property type="entry name" value="MIP18"/>
</dbReference>
<dbReference type="InterPro" id="IPR002744">
    <property type="entry name" value="MIP18-like"/>
</dbReference>
<dbReference type="PANTHER" id="PTHR12377:SF0">
    <property type="entry name" value="CYTOSOLIC IRON-SULFUR ASSEMBLY COMPONENT 2B"/>
    <property type="match status" value="1"/>
</dbReference>
<dbReference type="PANTHER" id="PTHR12377">
    <property type="entry name" value="CYTOSOLIC IRON-SULFUR ASSEMBLY COMPONENT 2B-RELATED"/>
    <property type="match status" value="1"/>
</dbReference>
<dbReference type="Pfam" id="PF01883">
    <property type="entry name" value="FeS_assembly_P"/>
    <property type="match status" value="1"/>
</dbReference>
<dbReference type="SUPFAM" id="SSF117916">
    <property type="entry name" value="Fe-S cluster assembly (FSCA) domain-like"/>
    <property type="match status" value="1"/>
</dbReference>
<protein>
    <recommendedName>
        <fullName evidence="2">Cytosolic iron-sulfur assembly component 2B</fullName>
    </recommendedName>
</protein>
<proteinExistence type="inferred from homology"/>